<gene>
    <name evidence="1" type="primary">thyX</name>
    <name type="ordered locus">MMAR_1961</name>
</gene>
<name>THYX_MYCMM</name>
<dbReference type="EC" id="2.1.1.148" evidence="1"/>
<dbReference type="EMBL" id="CP000854">
    <property type="protein sequence ID" value="ACC40411.1"/>
    <property type="molecule type" value="Genomic_DNA"/>
</dbReference>
<dbReference type="RefSeq" id="WP_012393751.1">
    <property type="nucleotide sequence ID" value="NC_010612.1"/>
</dbReference>
<dbReference type="SMR" id="B2HKZ0"/>
<dbReference type="STRING" id="216594.MMAR_1961"/>
<dbReference type="GeneID" id="34343783"/>
<dbReference type="KEGG" id="mmi:MMAR_1961"/>
<dbReference type="eggNOG" id="COG1351">
    <property type="taxonomic scope" value="Bacteria"/>
</dbReference>
<dbReference type="HOGENOM" id="CLU_077585_1_0_11"/>
<dbReference type="OrthoDB" id="9780625at2"/>
<dbReference type="UniPathway" id="UPA00575"/>
<dbReference type="Proteomes" id="UP000001190">
    <property type="component" value="Chromosome"/>
</dbReference>
<dbReference type="GO" id="GO:0050660">
    <property type="term" value="F:flavin adenine dinucleotide binding"/>
    <property type="evidence" value="ECO:0007669"/>
    <property type="project" value="InterPro"/>
</dbReference>
<dbReference type="GO" id="GO:0070402">
    <property type="term" value="F:NADPH binding"/>
    <property type="evidence" value="ECO:0007669"/>
    <property type="project" value="TreeGrafter"/>
</dbReference>
<dbReference type="GO" id="GO:0050797">
    <property type="term" value="F:thymidylate synthase (FAD) activity"/>
    <property type="evidence" value="ECO:0007669"/>
    <property type="project" value="UniProtKB-UniRule"/>
</dbReference>
<dbReference type="GO" id="GO:0004799">
    <property type="term" value="F:thymidylate synthase activity"/>
    <property type="evidence" value="ECO:0007669"/>
    <property type="project" value="TreeGrafter"/>
</dbReference>
<dbReference type="GO" id="GO:0006231">
    <property type="term" value="P:dTMP biosynthetic process"/>
    <property type="evidence" value="ECO:0007669"/>
    <property type="project" value="UniProtKB-UniRule"/>
</dbReference>
<dbReference type="GO" id="GO:0006235">
    <property type="term" value="P:dTTP biosynthetic process"/>
    <property type="evidence" value="ECO:0007669"/>
    <property type="project" value="UniProtKB-UniRule"/>
</dbReference>
<dbReference type="GO" id="GO:0032259">
    <property type="term" value="P:methylation"/>
    <property type="evidence" value="ECO:0007669"/>
    <property type="project" value="UniProtKB-KW"/>
</dbReference>
<dbReference type="CDD" id="cd20175">
    <property type="entry name" value="ThyX"/>
    <property type="match status" value="1"/>
</dbReference>
<dbReference type="Gene3D" id="3.30.1360.170">
    <property type="match status" value="1"/>
</dbReference>
<dbReference type="Gene3D" id="3.30.70.3180">
    <property type="match status" value="1"/>
</dbReference>
<dbReference type="Gene3D" id="6.10.140.450">
    <property type="match status" value="1"/>
</dbReference>
<dbReference type="HAMAP" id="MF_01408">
    <property type="entry name" value="ThyX"/>
    <property type="match status" value="1"/>
</dbReference>
<dbReference type="InterPro" id="IPR003669">
    <property type="entry name" value="Thymidylate_synthase_ThyX"/>
</dbReference>
<dbReference type="InterPro" id="IPR036098">
    <property type="entry name" value="Thymidylate_synthase_ThyX_sf"/>
</dbReference>
<dbReference type="NCBIfam" id="TIGR02170">
    <property type="entry name" value="thyX"/>
    <property type="match status" value="1"/>
</dbReference>
<dbReference type="PANTHER" id="PTHR34934">
    <property type="entry name" value="FLAVIN-DEPENDENT THYMIDYLATE SYNTHASE"/>
    <property type="match status" value="1"/>
</dbReference>
<dbReference type="PANTHER" id="PTHR34934:SF1">
    <property type="entry name" value="FLAVIN-DEPENDENT THYMIDYLATE SYNTHASE"/>
    <property type="match status" value="1"/>
</dbReference>
<dbReference type="Pfam" id="PF02511">
    <property type="entry name" value="Thy1"/>
    <property type="match status" value="1"/>
</dbReference>
<dbReference type="SUPFAM" id="SSF69796">
    <property type="entry name" value="Thymidylate synthase-complementing protein Thy1"/>
    <property type="match status" value="1"/>
</dbReference>
<dbReference type="PROSITE" id="PS51331">
    <property type="entry name" value="THYX"/>
    <property type="match status" value="1"/>
</dbReference>
<evidence type="ECO:0000255" key="1">
    <source>
        <dbReference type="HAMAP-Rule" id="MF_01408"/>
    </source>
</evidence>
<evidence type="ECO:0000255" key="2">
    <source>
        <dbReference type="PROSITE-ProRule" id="PRU00661"/>
    </source>
</evidence>
<reference key="1">
    <citation type="journal article" date="2008" name="Genome Res.">
        <title>Insights from the complete genome sequence of Mycobacterium marinum on the evolution of Mycobacterium tuberculosis.</title>
        <authorList>
            <person name="Stinear T.P."/>
            <person name="Seemann T."/>
            <person name="Harrison P.F."/>
            <person name="Jenkin G.A."/>
            <person name="Davies J.K."/>
            <person name="Johnson P.D."/>
            <person name="Abdellah Z."/>
            <person name="Arrowsmith C."/>
            <person name="Chillingworth T."/>
            <person name="Churcher C."/>
            <person name="Clarke K."/>
            <person name="Cronin A."/>
            <person name="Davis P."/>
            <person name="Goodhead I."/>
            <person name="Holroyd N."/>
            <person name="Jagels K."/>
            <person name="Lord A."/>
            <person name="Moule S."/>
            <person name="Mungall K."/>
            <person name="Norbertczak H."/>
            <person name="Quail M.A."/>
            <person name="Rabbinowitsch E."/>
            <person name="Walker D."/>
            <person name="White B."/>
            <person name="Whitehead S."/>
            <person name="Small P.L."/>
            <person name="Brosch R."/>
            <person name="Ramakrishnan L."/>
            <person name="Fischbach M.A."/>
            <person name="Parkhill J."/>
            <person name="Cole S.T."/>
        </authorList>
    </citation>
    <scope>NUCLEOTIDE SEQUENCE [LARGE SCALE GENOMIC DNA]</scope>
    <source>
        <strain>ATCC BAA-535 / M</strain>
    </source>
</reference>
<accession>B2HKZ0</accession>
<organism>
    <name type="scientific">Mycobacterium marinum (strain ATCC BAA-535 / M)</name>
    <dbReference type="NCBI Taxonomy" id="216594"/>
    <lineage>
        <taxon>Bacteria</taxon>
        <taxon>Bacillati</taxon>
        <taxon>Actinomycetota</taxon>
        <taxon>Actinomycetes</taxon>
        <taxon>Mycobacteriales</taxon>
        <taxon>Mycobacteriaceae</taxon>
        <taxon>Mycobacterium</taxon>
        <taxon>Mycobacterium ulcerans group</taxon>
    </lineage>
</organism>
<comment type="function">
    <text evidence="1">Catalyzes the reductive methylation of 2'-deoxyuridine-5'-monophosphate (dUMP) to 2'-deoxythymidine-5'-monophosphate (dTMP) while utilizing 5,10-methylenetetrahydrofolate (mTHF) as the methyl donor, and NADPH and FADH(2) as the reductant.</text>
</comment>
<comment type="catalytic activity">
    <reaction evidence="1">
        <text>dUMP + (6R)-5,10-methylene-5,6,7,8-tetrahydrofolate + NADPH + H(+) = dTMP + (6S)-5,6,7,8-tetrahydrofolate + NADP(+)</text>
        <dbReference type="Rhea" id="RHEA:29043"/>
        <dbReference type="ChEBI" id="CHEBI:15378"/>
        <dbReference type="ChEBI" id="CHEBI:15636"/>
        <dbReference type="ChEBI" id="CHEBI:57453"/>
        <dbReference type="ChEBI" id="CHEBI:57783"/>
        <dbReference type="ChEBI" id="CHEBI:58349"/>
        <dbReference type="ChEBI" id="CHEBI:63528"/>
        <dbReference type="ChEBI" id="CHEBI:246422"/>
        <dbReference type="EC" id="2.1.1.148"/>
    </reaction>
</comment>
<comment type="cofactor">
    <cofactor evidence="1">
        <name>FAD</name>
        <dbReference type="ChEBI" id="CHEBI:57692"/>
    </cofactor>
    <text evidence="1">Binds 4 FAD per tetramer. Each FAD binding site is formed by three monomers.</text>
</comment>
<comment type="pathway">
    <text evidence="1">Pyrimidine metabolism; dTTP biosynthesis.</text>
</comment>
<comment type="subunit">
    <text evidence="1">Homotetramer.</text>
</comment>
<comment type="similarity">
    <text evidence="1">Belongs to the thymidylate synthase ThyX family.</text>
</comment>
<feature type="chain" id="PRO_1000184594" description="Flavin-dependent thymidylate synthase">
    <location>
        <begin position="1"/>
        <end position="250"/>
    </location>
</feature>
<feature type="domain" description="ThyX" evidence="2">
    <location>
        <begin position="7"/>
        <end position="233"/>
    </location>
</feature>
<feature type="short sequence motif" description="ThyX motif" evidence="1">
    <location>
        <begin position="95"/>
        <end position="105"/>
    </location>
</feature>
<feature type="active site" description="Involved in ionization of N3 of dUMP, leading to its activation" evidence="1">
    <location>
        <position position="199"/>
    </location>
</feature>
<feature type="binding site" evidence="1">
    <location>
        <begin position="92"/>
        <end position="95"/>
    </location>
    <ligand>
        <name>dUMP</name>
        <dbReference type="ChEBI" id="CHEBI:246422"/>
        <note>ligand shared between dimeric partners</note>
    </ligand>
</feature>
<feature type="binding site" evidence="1">
    <location>
        <begin position="95"/>
        <end position="97"/>
    </location>
    <ligand>
        <name>FAD</name>
        <dbReference type="ChEBI" id="CHEBI:57692"/>
        <note>ligand shared between neighboring subunits</note>
    </ligand>
</feature>
<feature type="binding site" description="in other chain" evidence="1">
    <location>
        <begin position="103"/>
        <end position="107"/>
    </location>
    <ligand>
        <name>dUMP</name>
        <dbReference type="ChEBI" id="CHEBI:246422"/>
        <note>ligand shared between dimeric partners</note>
    </ligand>
</feature>
<feature type="binding site" evidence="1">
    <location>
        <position position="103"/>
    </location>
    <ligand>
        <name>FAD</name>
        <dbReference type="ChEBI" id="CHEBI:57692"/>
        <note>ligand shared between neighboring subunits</note>
    </ligand>
</feature>
<feature type="binding site" description="in other chain" evidence="1">
    <location>
        <position position="172"/>
    </location>
    <ligand>
        <name>dUMP</name>
        <dbReference type="ChEBI" id="CHEBI:246422"/>
        <note>ligand shared between dimeric partners</note>
    </ligand>
</feature>
<feature type="binding site" evidence="1">
    <location>
        <begin position="188"/>
        <end position="190"/>
    </location>
    <ligand>
        <name>FAD</name>
        <dbReference type="ChEBI" id="CHEBI:57692"/>
        <note>ligand shared between neighboring subunits</note>
    </ligand>
</feature>
<feature type="binding site" evidence="1">
    <location>
        <position position="194"/>
    </location>
    <ligand>
        <name>FAD</name>
        <dbReference type="ChEBI" id="CHEBI:57692"/>
        <note>ligand shared between neighboring subunits</note>
    </ligand>
</feature>
<feature type="binding site" evidence="1">
    <location>
        <position position="199"/>
    </location>
    <ligand>
        <name>dUMP</name>
        <dbReference type="ChEBI" id="CHEBI:246422"/>
        <note>ligand shared between dimeric partners</note>
    </ligand>
</feature>
<sequence length="250" mass="27606">MAETAPLRVQLIAKTEFLAPPDVPWTTDADGGEALVEFAGRACYQSWSKPNPKTATNAGYLRHIIDVGHFAVLEHASVSFYISGISRSCTHELIRHRHFSYSQLSQRYVPEGDSRVVVPPGLEDDPELREILIAAADASRATYTELLTKLEARFADQPNAVLRRKQARQAARAVLPNATETRIVVSGNYRAWRHFIAMRASEHADVEIRRLAIECLRQLVAVAPAVFADFEVTTLADGSEVATSPLATEV</sequence>
<proteinExistence type="inferred from homology"/>
<protein>
    <recommendedName>
        <fullName evidence="1">Flavin-dependent thymidylate synthase</fullName>
        <shortName evidence="1">FDTS</shortName>
        <ecNumber evidence="1">2.1.1.148</ecNumber>
    </recommendedName>
    <alternativeName>
        <fullName evidence="1">FAD-dependent thymidylate synthase</fullName>
    </alternativeName>
    <alternativeName>
        <fullName evidence="1">Thymidylate synthase ThyX</fullName>
        <shortName evidence="1">TS</shortName>
        <shortName evidence="1">TSase</shortName>
    </alternativeName>
</protein>
<keyword id="KW-0274">FAD</keyword>
<keyword id="KW-0285">Flavoprotein</keyword>
<keyword id="KW-0489">Methyltransferase</keyword>
<keyword id="KW-0521">NADP</keyword>
<keyword id="KW-0545">Nucleotide biosynthesis</keyword>
<keyword id="KW-1185">Reference proteome</keyword>
<keyword id="KW-0808">Transferase</keyword>